<proteinExistence type="inferred from homology"/>
<organism>
    <name type="scientific">Burkholderia ambifaria (strain ATCC BAA-244 / DSM 16087 / CCUG 44356 / LMG 19182 / AMMD)</name>
    <name type="common">Burkholderia cepacia (strain AMMD)</name>
    <dbReference type="NCBI Taxonomy" id="339670"/>
    <lineage>
        <taxon>Bacteria</taxon>
        <taxon>Pseudomonadati</taxon>
        <taxon>Pseudomonadota</taxon>
        <taxon>Betaproteobacteria</taxon>
        <taxon>Burkholderiales</taxon>
        <taxon>Burkholderiaceae</taxon>
        <taxon>Burkholderia</taxon>
        <taxon>Burkholderia cepacia complex</taxon>
    </lineage>
</organism>
<feature type="chain" id="PRO_1000055099" description="ATP synthase subunit beta">
    <location>
        <begin position="1"/>
        <end position="464"/>
    </location>
</feature>
<feature type="binding site" evidence="1">
    <location>
        <begin position="153"/>
        <end position="160"/>
    </location>
    <ligand>
        <name>ATP</name>
        <dbReference type="ChEBI" id="CHEBI:30616"/>
    </ligand>
</feature>
<accession>Q0BJL5</accession>
<keyword id="KW-0066">ATP synthesis</keyword>
<keyword id="KW-0067">ATP-binding</keyword>
<keyword id="KW-0997">Cell inner membrane</keyword>
<keyword id="KW-1003">Cell membrane</keyword>
<keyword id="KW-0139">CF(1)</keyword>
<keyword id="KW-0375">Hydrogen ion transport</keyword>
<keyword id="KW-0406">Ion transport</keyword>
<keyword id="KW-0472">Membrane</keyword>
<keyword id="KW-0547">Nucleotide-binding</keyword>
<keyword id="KW-1278">Translocase</keyword>
<keyword id="KW-0813">Transport</keyword>
<gene>
    <name evidence="1" type="primary">atpD</name>
    <name type="ordered locus">Bamb_0097</name>
</gene>
<reference key="1">
    <citation type="submission" date="2006-08" db="EMBL/GenBank/DDBJ databases">
        <title>Complete sequence of chromosome 1 of Burkholderia cepacia AMMD.</title>
        <authorList>
            <person name="Copeland A."/>
            <person name="Lucas S."/>
            <person name="Lapidus A."/>
            <person name="Barry K."/>
            <person name="Detter J.C."/>
            <person name="Glavina del Rio T."/>
            <person name="Hammon N."/>
            <person name="Israni S."/>
            <person name="Pitluck S."/>
            <person name="Bruce D."/>
            <person name="Chain P."/>
            <person name="Malfatti S."/>
            <person name="Shin M."/>
            <person name="Vergez L."/>
            <person name="Schmutz J."/>
            <person name="Larimer F."/>
            <person name="Land M."/>
            <person name="Hauser L."/>
            <person name="Kyrpides N."/>
            <person name="Kim E."/>
            <person name="Parke J."/>
            <person name="Coenye T."/>
            <person name="Konstantinidis K."/>
            <person name="Ramette A."/>
            <person name="Tiedje J."/>
            <person name="Richardson P."/>
        </authorList>
    </citation>
    <scope>NUCLEOTIDE SEQUENCE [LARGE SCALE GENOMIC DNA]</scope>
    <source>
        <strain>ATCC BAA-244 / DSM 16087 / CCUG 44356 / LMG 19182 / AMMD</strain>
    </source>
</reference>
<sequence>MSTAALVEGKIVQCIGAVIDVEFPRESMPKIYDALILDGSELTLEVQQQLGDGVVRTICLGASDGLRRGLTVKNTAKPISVPVGKPTLGRIMDVLGRPIDEAGPIESEVTRSIHQKAPAFDELSPSTELLETGIKVIDLICPFAKGGKVGLFGGAGVGKTVNMMELINNIAKEHGGYSVFAGVGERTREGNDFYHEMKDSNVLDKVALVYGQMNEPPGNRLRVALTGLTMAEHFRDEGLDVLFFVDNIYRFTLAGTEVSALLGRMPSAVGYQPTLAEEMGKLQERITSTKKGSITSVQAVYVPADDLTDPSPATTFGHLDATVVLSRDIASLGIYPAVDPLDSTSRQIDPNVIGEEHYSITRRVQQTLQRYKELRDIIAILGMDELSPEDKLSVARARKIQRFLSQPFHVAEVFTGSPGKYVPLKETIRGFKMIVDGECDHLPEQAFYMVGTIDEAFEKAKKIS</sequence>
<protein>
    <recommendedName>
        <fullName evidence="1">ATP synthase subunit beta</fullName>
        <ecNumber evidence="1">7.1.2.2</ecNumber>
    </recommendedName>
    <alternativeName>
        <fullName evidence="1">ATP synthase F1 sector subunit beta</fullName>
    </alternativeName>
    <alternativeName>
        <fullName evidence="1">F-ATPase subunit beta</fullName>
    </alternativeName>
</protein>
<dbReference type="EC" id="7.1.2.2" evidence="1"/>
<dbReference type="EMBL" id="CP000440">
    <property type="protein sequence ID" value="ABI85658.1"/>
    <property type="molecule type" value="Genomic_DNA"/>
</dbReference>
<dbReference type="RefSeq" id="WP_011655620.1">
    <property type="nucleotide sequence ID" value="NC_008390.1"/>
</dbReference>
<dbReference type="SMR" id="Q0BJL5"/>
<dbReference type="GeneID" id="93084495"/>
<dbReference type="KEGG" id="bam:Bamb_0097"/>
<dbReference type="eggNOG" id="COG0055">
    <property type="taxonomic scope" value="Bacteria"/>
</dbReference>
<dbReference type="Proteomes" id="UP000000662">
    <property type="component" value="Chromosome 1"/>
</dbReference>
<dbReference type="GO" id="GO:0005886">
    <property type="term" value="C:plasma membrane"/>
    <property type="evidence" value="ECO:0007669"/>
    <property type="project" value="UniProtKB-SubCell"/>
</dbReference>
<dbReference type="GO" id="GO:0045259">
    <property type="term" value="C:proton-transporting ATP synthase complex"/>
    <property type="evidence" value="ECO:0007669"/>
    <property type="project" value="UniProtKB-KW"/>
</dbReference>
<dbReference type="GO" id="GO:0005524">
    <property type="term" value="F:ATP binding"/>
    <property type="evidence" value="ECO:0007669"/>
    <property type="project" value="UniProtKB-UniRule"/>
</dbReference>
<dbReference type="GO" id="GO:0016887">
    <property type="term" value="F:ATP hydrolysis activity"/>
    <property type="evidence" value="ECO:0007669"/>
    <property type="project" value="InterPro"/>
</dbReference>
<dbReference type="GO" id="GO:0046933">
    <property type="term" value="F:proton-transporting ATP synthase activity, rotational mechanism"/>
    <property type="evidence" value="ECO:0007669"/>
    <property type="project" value="UniProtKB-UniRule"/>
</dbReference>
<dbReference type="CDD" id="cd18110">
    <property type="entry name" value="ATP-synt_F1_beta_C"/>
    <property type="match status" value="1"/>
</dbReference>
<dbReference type="CDD" id="cd18115">
    <property type="entry name" value="ATP-synt_F1_beta_N"/>
    <property type="match status" value="1"/>
</dbReference>
<dbReference type="CDD" id="cd01133">
    <property type="entry name" value="F1-ATPase_beta_CD"/>
    <property type="match status" value="1"/>
</dbReference>
<dbReference type="FunFam" id="1.10.1140.10:FF:000001">
    <property type="entry name" value="ATP synthase subunit beta"/>
    <property type="match status" value="1"/>
</dbReference>
<dbReference type="FunFam" id="3.40.50.300:FF:000004">
    <property type="entry name" value="ATP synthase subunit beta"/>
    <property type="match status" value="1"/>
</dbReference>
<dbReference type="Gene3D" id="2.40.10.170">
    <property type="match status" value="1"/>
</dbReference>
<dbReference type="Gene3D" id="1.10.1140.10">
    <property type="entry name" value="Bovine Mitochondrial F1-atpase, Atp Synthase Beta Chain, Chain D, domain 3"/>
    <property type="match status" value="1"/>
</dbReference>
<dbReference type="Gene3D" id="3.40.50.300">
    <property type="entry name" value="P-loop containing nucleotide triphosphate hydrolases"/>
    <property type="match status" value="1"/>
</dbReference>
<dbReference type="HAMAP" id="MF_01347">
    <property type="entry name" value="ATP_synth_beta_bact"/>
    <property type="match status" value="1"/>
</dbReference>
<dbReference type="InterPro" id="IPR003593">
    <property type="entry name" value="AAA+_ATPase"/>
</dbReference>
<dbReference type="InterPro" id="IPR055190">
    <property type="entry name" value="ATP-synt_VA_C"/>
</dbReference>
<dbReference type="InterPro" id="IPR005722">
    <property type="entry name" value="ATP_synth_F1_bsu"/>
</dbReference>
<dbReference type="InterPro" id="IPR020003">
    <property type="entry name" value="ATPase_a/bsu_AS"/>
</dbReference>
<dbReference type="InterPro" id="IPR050053">
    <property type="entry name" value="ATPase_alpha/beta_chains"/>
</dbReference>
<dbReference type="InterPro" id="IPR004100">
    <property type="entry name" value="ATPase_F1/V1/A1_a/bsu_N"/>
</dbReference>
<dbReference type="InterPro" id="IPR036121">
    <property type="entry name" value="ATPase_F1/V1/A1_a/bsu_N_sf"/>
</dbReference>
<dbReference type="InterPro" id="IPR000194">
    <property type="entry name" value="ATPase_F1/V1/A1_a/bsu_nucl-bd"/>
</dbReference>
<dbReference type="InterPro" id="IPR024034">
    <property type="entry name" value="ATPase_F1/V1_b/a_C"/>
</dbReference>
<dbReference type="InterPro" id="IPR027417">
    <property type="entry name" value="P-loop_NTPase"/>
</dbReference>
<dbReference type="NCBIfam" id="TIGR01039">
    <property type="entry name" value="atpD"/>
    <property type="match status" value="1"/>
</dbReference>
<dbReference type="PANTHER" id="PTHR15184">
    <property type="entry name" value="ATP SYNTHASE"/>
    <property type="match status" value="1"/>
</dbReference>
<dbReference type="PANTHER" id="PTHR15184:SF71">
    <property type="entry name" value="ATP SYNTHASE SUBUNIT BETA, MITOCHONDRIAL"/>
    <property type="match status" value="1"/>
</dbReference>
<dbReference type="Pfam" id="PF00006">
    <property type="entry name" value="ATP-synt_ab"/>
    <property type="match status" value="1"/>
</dbReference>
<dbReference type="Pfam" id="PF02874">
    <property type="entry name" value="ATP-synt_ab_N"/>
    <property type="match status" value="1"/>
</dbReference>
<dbReference type="Pfam" id="PF22919">
    <property type="entry name" value="ATP-synt_VA_C"/>
    <property type="match status" value="1"/>
</dbReference>
<dbReference type="SMART" id="SM00382">
    <property type="entry name" value="AAA"/>
    <property type="match status" value="1"/>
</dbReference>
<dbReference type="SUPFAM" id="SSF47917">
    <property type="entry name" value="C-terminal domain of alpha and beta subunits of F1 ATP synthase"/>
    <property type="match status" value="1"/>
</dbReference>
<dbReference type="SUPFAM" id="SSF50615">
    <property type="entry name" value="N-terminal domain of alpha and beta subunits of F1 ATP synthase"/>
    <property type="match status" value="1"/>
</dbReference>
<dbReference type="SUPFAM" id="SSF52540">
    <property type="entry name" value="P-loop containing nucleoside triphosphate hydrolases"/>
    <property type="match status" value="1"/>
</dbReference>
<dbReference type="PROSITE" id="PS00152">
    <property type="entry name" value="ATPASE_ALPHA_BETA"/>
    <property type="match status" value="1"/>
</dbReference>
<evidence type="ECO:0000255" key="1">
    <source>
        <dbReference type="HAMAP-Rule" id="MF_01347"/>
    </source>
</evidence>
<comment type="function">
    <text evidence="1">Produces ATP from ADP in the presence of a proton gradient across the membrane. The catalytic sites are hosted primarily by the beta subunits.</text>
</comment>
<comment type="catalytic activity">
    <reaction evidence="1">
        <text>ATP + H2O + 4 H(+)(in) = ADP + phosphate + 5 H(+)(out)</text>
        <dbReference type="Rhea" id="RHEA:57720"/>
        <dbReference type="ChEBI" id="CHEBI:15377"/>
        <dbReference type="ChEBI" id="CHEBI:15378"/>
        <dbReference type="ChEBI" id="CHEBI:30616"/>
        <dbReference type="ChEBI" id="CHEBI:43474"/>
        <dbReference type="ChEBI" id="CHEBI:456216"/>
        <dbReference type="EC" id="7.1.2.2"/>
    </reaction>
</comment>
<comment type="subunit">
    <text evidence="1">F-type ATPases have 2 components, CF(1) - the catalytic core - and CF(0) - the membrane proton channel. CF(1) has five subunits: alpha(3), beta(3), gamma(1), delta(1), epsilon(1). CF(0) has three main subunits: a(1), b(2) and c(9-12). The alpha and beta chains form an alternating ring which encloses part of the gamma chain. CF(1) is attached to CF(0) by a central stalk formed by the gamma and epsilon chains, while a peripheral stalk is formed by the delta and b chains.</text>
</comment>
<comment type="subcellular location">
    <subcellularLocation>
        <location evidence="1">Cell inner membrane</location>
        <topology evidence="1">Peripheral membrane protein</topology>
    </subcellularLocation>
</comment>
<comment type="similarity">
    <text evidence="1">Belongs to the ATPase alpha/beta chains family.</text>
</comment>
<name>ATPB_BURCM</name>